<accession>Q6N5U3</accession>
<comment type="function">
    <text evidence="1">Involved in the biosynthesis of osmoregulated periplasmic glucans (OPGs).</text>
</comment>
<comment type="pathway">
    <text evidence="1">Glycan metabolism; osmoregulated periplasmic glucan (OPG) biosynthesis.</text>
</comment>
<comment type="subcellular location">
    <subcellularLocation>
        <location evidence="1">Cell inner membrane</location>
        <topology evidence="1">Multi-pass membrane protein</topology>
    </subcellularLocation>
</comment>
<comment type="similarity">
    <text evidence="1">Belongs to the glycosyltransferase 2 family. OpgH subfamily.</text>
</comment>
<sequence length="721" mass="79058">MDAVIAPRHEDCRDVERRAEPLPANAPLPMPVQSLLQSPRAAAVRSPAAWRRVLIMVATAVLSAAGIYEMYQVLQVGGITVLEGVVLVLFAALFAWVALSFVSALAGFTVLCCGWRDDVGISTDGSLPSVSSRIAMLLPTYNEDAPVVFARLQATRQSVDETGRGAQFDWFVLSDSTDPSVWIDEERCYAELAATHDRLYYRHRPHNTARKSGNIADWVERFGGAYDFMVILDADSVMTGDVLVRVAAAMETNSDVGLIQTLPVVVQARTLFARVQQFAGSIYGPMIAAGTAWWHGSESNYWGHNAIIRVSAFAGSAGLPTLAGRKPFGGEILSHDFVEAALMRRAGWRIHLAPTLRGSYEECPPSLLDFAARDRRWCQGNLQHGKLLTARGLHWVSRLHFLTGIGAYLTAPMWLAFLIAGILISLQAQFVRPEYFPKDFSLFPIWPAQDPVRAAWVFAGTMGLLILPKLLALFLVLIRSDTRRRFGGGLRTFGGVLLETMISALTAPVMMVFQSTAVIEILLGRDAGWQVQHRGDGAIPLREVVRRYALPTALGTTMAIGAWLVSWPLLLWMTPVIVGLLLAIPVALLTTRASRSRPLLMMTPEQIDPPAILAQVHALADRLCPANQTTDPLSALRGDRRLRELHLAALAFHPPRRRGRIDPHLATARVLIDDAESYSEAAGWLGPREIRAVLGDRETLQRLLQLSGEHAQLAVGSEPSG</sequence>
<feature type="chain" id="PRO_0000210359" description="Glucans biosynthesis glucosyltransferase H">
    <location>
        <begin position="1"/>
        <end position="721"/>
    </location>
</feature>
<feature type="transmembrane region" description="Helical" evidence="1">
    <location>
        <begin position="53"/>
        <end position="75"/>
    </location>
</feature>
<feature type="transmembrane region" description="Helical" evidence="1">
    <location>
        <begin position="85"/>
        <end position="107"/>
    </location>
</feature>
<feature type="transmembrane region" description="Helical" evidence="1">
    <location>
        <begin position="404"/>
        <end position="426"/>
    </location>
</feature>
<feature type="transmembrane region" description="Helical" evidence="1">
    <location>
        <begin position="456"/>
        <end position="478"/>
    </location>
</feature>
<feature type="transmembrane region" description="Helical" evidence="1">
    <location>
        <begin position="490"/>
        <end position="512"/>
    </location>
</feature>
<feature type="transmembrane region" description="Helical" evidence="1">
    <location>
        <begin position="567"/>
        <end position="589"/>
    </location>
</feature>
<keyword id="KW-0997">Cell inner membrane</keyword>
<keyword id="KW-1003">Cell membrane</keyword>
<keyword id="KW-0328">Glycosyltransferase</keyword>
<keyword id="KW-0472">Membrane</keyword>
<keyword id="KW-0808">Transferase</keyword>
<keyword id="KW-0812">Transmembrane</keyword>
<keyword id="KW-1133">Transmembrane helix</keyword>
<organism>
    <name type="scientific">Rhodopseudomonas palustris (strain ATCC BAA-98 / CGA009)</name>
    <dbReference type="NCBI Taxonomy" id="258594"/>
    <lineage>
        <taxon>Bacteria</taxon>
        <taxon>Pseudomonadati</taxon>
        <taxon>Pseudomonadota</taxon>
        <taxon>Alphaproteobacteria</taxon>
        <taxon>Hyphomicrobiales</taxon>
        <taxon>Nitrobacteraceae</taxon>
        <taxon>Rhodopseudomonas</taxon>
    </lineage>
</organism>
<dbReference type="EC" id="2.4.1.-" evidence="1"/>
<dbReference type="EMBL" id="BX572602">
    <property type="protein sequence ID" value="CAE28318.1"/>
    <property type="molecule type" value="Genomic_DNA"/>
</dbReference>
<dbReference type="RefSeq" id="WP_011158426.1">
    <property type="nucleotide sequence ID" value="NZ_CP116810.1"/>
</dbReference>
<dbReference type="STRING" id="258594.RPA2877"/>
<dbReference type="CAZy" id="GT2">
    <property type="family name" value="Glycosyltransferase Family 2"/>
</dbReference>
<dbReference type="GeneID" id="66893958"/>
<dbReference type="eggNOG" id="COG2943">
    <property type="taxonomic scope" value="Bacteria"/>
</dbReference>
<dbReference type="HOGENOM" id="CLU_015730_1_0_5"/>
<dbReference type="PhylomeDB" id="Q6N5U3"/>
<dbReference type="UniPathway" id="UPA00637"/>
<dbReference type="GO" id="GO:0005886">
    <property type="term" value="C:plasma membrane"/>
    <property type="evidence" value="ECO:0007669"/>
    <property type="project" value="UniProtKB-SubCell"/>
</dbReference>
<dbReference type="GO" id="GO:0016758">
    <property type="term" value="F:hexosyltransferase activity"/>
    <property type="evidence" value="ECO:0007669"/>
    <property type="project" value="UniProtKB-UniRule"/>
</dbReference>
<dbReference type="GO" id="GO:0009250">
    <property type="term" value="P:glucan biosynthetic process"/>
    <property type="evidence" value="ECO:0007669"/>
    <property type="project" value="UniProtKB-UniRule"/>
</dbReference>
<dbReference type="CDD" id="cd04191">
    <property type="entry name" value="Glucan_BSP_MdoH"/>
    <property type="match status" value="1"/>
</dbReference>
<dbReference type="Gene3D" id="3.90.550.10">
    <property type="entry name" value="Spore Coat Polysaccharide Biosynthesis Protein SpsA, Chain A"/>
    <property type="match status" value="1"/>
</dbReference>
<dbReference type="HAMAP" id="MF_01072">
    <property type="entry name" value="MdoH_OpgH"/>
    <property type="match status" value="1"/>
</dbReference>
<dbReference type="InterPro" id="IPR023725">
    <property type="entry name" value="Glucans_biosynth_gluTrFase_H"/>
</dbReference>
<dbReference type="InterPro" id="IPR001173">
    <property type="entry name" value="Glyco_trans_2-like"/>
</dbReference>
<dbReference type="InterPro" id="IPR050321">
    <property type="entry name" value="Glycosyltr_2/OpgH_subfam"/>
</dbReference>
<dbReference type="InterPro" id="IPR029044">
    <property type="entry name" value="Nucleotide-diphossugar_trans"/>
</dbReference>
<dbReference type="NCBIfam" id="NF003956">
    <property type="entry name" value="PRK05454.1-3"/>
    <property type="match status" value="1"/>
</dbReference>
<dbReference type="NCBIfam" id="NF003958">
    <property type="entry name" value="PRK05454.2-1"/>
    <property type="match status" value="1"/>
</dbReference>
<dbReference type="NCBIfam" id="NF003962">
    <property type="entry name" value="PRK05454.2-5"/>
    <property type="match status" value="1"/>
</dbReference>
<dbReference type="PANTHER" id="PTHR43867">
    <property type="entry name" value="CELLULOSE SYNTHASE CATALYTIC SUBUNIT A [UDP-FORMING]"/>
    <property type="match status" value="1"/>
</dbReference>
<dbReference type="PANTHER" id="PTHR43867:SF5">
    <property type="entry name" value="GLUCANS BIOSYNTHESIS GLUCOSYLTRANSFERASE H"/>
    <property type="match status" value="1"/>
</dbReference>
<dbReference type="Pfam" id="PF13632">
    <property type="entry name" value="Glyco_trans_2_3"/>
    <property type="match status" value="1"/>
</dbReference>
<dbReference type="SUPFAM" id="SSF53448">
    <property type="entry name" value="Nucleotide-diphospho-sugar transferases"/>
    <property type="match status" value="1"/>
</dbReference>
<evidence type="ECO:0000255" key="1">
    <source>
        <dbReference type="HAMAP-Rule" id="MF_01072"/>
    </source>
</evidence>
<gene>
    <name evidence="1" type="primary">opgH</name>
    <name type="ordered locus">RPA2877</name>
</gene>
<proteinExistence type="inferred from homology"/>
<name>OPGH_RHOPA</name>
<protein>
    <recommendedName>
        <fullName evidence="1">Glucans biosynthesis glucosyltransferase H</fullName>
        <ecNumber evidence="1">2.4.1.-</ecNumber>
    </recommendedName>
</protein>
<reference key="1">
    <citation type="journal article" date="2004" name="Nat. Biotechnol.">
        <title>Complete genome sequence of the metabolically versatile photosynthetic bacterium Rhodopseudomonas palustris.</title>
        <authorList>
            <person name="Larimer F.W."/>
            <person name="Chain P."/>
            <person name="Hauser L."/>
            <person name="Lamerdin J.E."/>
            <person name="Malfatti S."/>
            <person name="Do L."/>
            <person name="Land M.L."/>
            <person name="Pelletier D.A."/>
            <person name="Beatty J.T."/>
            <person name="Lang A.S."/>
            <person name="Tabita F.R."/>
            <person name="Gibson J.L."/>
            <person name="Hanson T.E."/>
            <person name="Bobst C."/>
            <person name="Torres y Torres J.L."/>
            <person name="Peres C."/>
            <person name="Harrison F.H."/>
            <person name="Gibson J."/>
            <person name="Harwood C.S."/>
        </authorList>
    </citation>
    <scope>NUCLEOTIDE SEQUENCE [LARGE SCALE GENOMIC DNA]</scope>
    <source>
        <strain>ATCC BAA-98 / CGA009</strain>
    </source>
</reference>